<organism>
    <name type="scientific">Methanococcus maripaludis (strain C5 / ATCC BAA-1333)</name>
    <dbReference type="NCBI Taxonomy" id="402880"/>
    <lineage>
        <taxon>Archaea</taxon>
        <taxon>Methanobacteriati</taxon>
        <taxon>Methanobacteriota</taxon>
        <taxon>Methanomada group</taxon>
        <taxon>Methanococci</taxon>
        <taxon>Methanococcales</taxon>
        <taxon>Methanococcaceae</taxon>
        <taxon>Methanococcus</taxon>
    </lineage>
</organism>
<sequence length="262" mass="26626">MSHGGGGHAAELFPEDQVLAFGAVLSLVGIYIAHFFPSLAMLLGGLLAAGACVAGANTTRRVAAYGLGTGVPSIGMVSLGMGTISALAGVLIPSAFGLPVLVTPILAAVIAVVVGFIVGKLTQNPVGMKVPIIVSSMTKLSLMGALAILGFCTAFAGGFSADIIINGAINNGVIALAFIAAGMAILHPFNACIGPDESHKRTMTLAVACGFMAWLVFAIAKLDIVSTAVAAIFWFIAYGTFVKTSLADACEVKYVPELPKKE</sequence>
<protein>
    <recommendedName>
        <fullName evidence="1">Tetrahydromethanopterin S-methyltransferase subunit C</fullName>
        <ecNumber evidence="1">7.2.1.4</ecNumber>
    </recommendedName>
    <alternativeName>
        <fullName evidence="1">N5-methyltetrahydromethanopterin--coenzyme M methyltransferase subunit C</fullName>
    </alternativeName>
</protein>
<evidence type="ECO:0000255" key="1">
    <source>
        <dbReference type="HAMAP-Rule" id="MF_01096"/>
    </source>
</evidence>
<accession>A4FVW3</accession>
<gene>
    <name evidence="1" type="primary">mtrC</name>
    <name type="ordered locus">MmarC5_0014</name>
</gene>
<comment type="function">
    <text evidence="1">Part of a complex that catalyzes the formation of methyl-coenzyme M and tetrahydromethanopterin from coenzyme M and methyl-tetrahydromethanopterin. This is an energy-conserving, sodium-ion translocating step.</text>
</comment>
<comment type="catalytic activity">
    <reaction evidence="1">
        <text>5-methyl-5,6,7,8-tetrahydromethanopterin + coenzyme M + 2 Na(+)(in) = 5,6,7,8-tetrahydromethanopterin + methyl-coenzyme M + 2 Na(+)(out)</text>
        <dbReference type="Rhea" id="RHEA:53492"/>
        <dbReference type="ChEBI" id="CHEBI:29101"/>
        <dbReference type="ChEBI" id="CHEBI:58103"/>
        <dbReference type="ChEBI" id="CHEBI:58116"/>
        <dbReference type="ChEBI" id="CHEBI:58286"/>
        <dbReference type="ChEBI" id="CHEBI:58319"/>
        <dbReference type="EC" id="7.2.1.4"/>
    </reaction>
</comment>
<comment type="pathway">
    <text evidence="1">One-carbon metabolism; methanogenesis from CO(2); methyl-coenzyme M from 5,10-methylene-5,6,7,8-tetrahydromethanopterin: step 2/2.</text>
</comment>
<comment type="subunit">
    <text evidence="1">The complex is composed of 8 subunits; MtrA, MtrB, MtrC, MtrD, MtrE, MtrF, MtrG and MtrH.</text>
</comment>
<comment type="subcellular location">
    <subcellularLocation>
        <location evidence="1">Cell membrane</location>
        <topology evidence="1">Multi-pass membrane protein</topology>
    </subcellularLocation>
</comment>
<comment type="similarity">
    <text evidence="1">Belongs to the MtrC family.</text>
</comment>
<feature type="chain" id="PRO_1000064939" description="Tetrahydromethanopterin S-methyltransferase subunit C">
    <location>
        <begin position="1"/>
        <end position="262"/>
    </location>
</feature>
<feature type="transmembrane region" description="Helical" evidence="1">
    <location>
        <begin position="27"/>
        <end position="47"/>
    </location>
</feature>
<feature type="transmembrane region" description="Helical" evidence="1">
    <location>
        <begin position="72"/>
        <end position="92"/>
    </location>
</feature>
<feature type="transmembrane region" description="Helical" evidence="1">
    <location>
        <begin position="98"/>
        <end position="118"/>
    </location>
</feature>
<feature type="transmembrane region" description="Helical" evidence="1">
    <location>
        <begin position="145"/>
        <end position="165"/>
    </location>
</feature>
<feature type="transmembrane region" description="Helical" evidence="1">
    <location>
        <begin position="173"/>
        <end position="193"/>
    </location>
</feature>
<feature type="transmembrane region" description="Helical" evidence="1">
    <location>
        <begin position="200"/>
        <end position="220"/>
    </location>
</feature>
<feature type="transmembrane region" description="Helical" evidence="1">
    <location>
        <begin position="222"/>
        <end position="242"/>
    </location>
</feature>
<reference key="1">
    <citation type="submission" date="2007-03" db="EMBL/GenBank/DDBJ databases">
        <title>Complete sequence of chromosome of Methanococcus maripaludis C5.</title>
        <authorList>
            <consortium name="US DOE Joint Genome Institute"/>
            <person name="Copeland A."/>
            <person name="Lucas S."/>
            <person name="Lapidus A."/>
            <person name="Barry K."/>
            <person name="Glavina del Rio T."/>
            <person name="Dalin E."/>
            <person name="Tice H."/>
            <person name="Pitluck S."/>
            <person name="Chertkov O."/>
            <person name="Brettin T."/>
            <person name="Bruce D."/>
            <person name="Han C."/>
            <person name="Detter J.C."/>
            <person name="Schmutz J."/>
            <person name="Larimer F."/>
            <person name="Land M."/>
            <person name="Hauser L."/>
            <person name="Kyrpides N."/>
            <person name="Mikhailova N."/>
            <person name="Sieprawska-Lupa M."/>
            <person name="Whitman W.B."/>
            <person name="Richardson P."/>
        </authorList>
    </citation>
    <scope>NUCLEOTIDE SEQUENCE [LARGE SCALE GENOMIC DNA]</scope>
    <source>
        <strain>C5 / ATCC BAA-1333</strain>
    </source>
</reference>
<proteinExistence type="inferred from homology"/>
<keyword id="KW-1003">Cell membrane</keyword>
<keyword id="KW-0472">Membrane</keyword>
<keyword id="KW-0484">Methanogenesis</keyword>
<keyword id="KW-0489">Methyltransferase</keyword>
<keyword id="KW-0554">One-carbon metabolism</keyword>
<keyword id="KW-0808">Transferase</keyword>
<keyword id="KW-1278">Translocase</keyword>
<keyword id="KW-0812">Transmembrane</keyword>
<keyword id="KW-1133">Transmembrane helix</keyword>
<dbReference type="EC" id="7.2.1.4" evidence="1"/>
<dbReference type="EMBL" id="CP000609">
    <property type="protein sequence ID" value="ABO34331.1"/>
    <property type="molecule type" value="Genomic_DNA"/>
</dbReference>
<dbReference type="RefSeq" id="WP_011867793.1">
    <property type="nucleotide sequence ID" value="NC_009135.1"/>
</dbReference>
<dbReference type="SMR" id="A4FVW3"/>
<dbReference type="STRING" id="402880.MmarC5_0014"/>
<dbReference type="GeneID" id="4928231"/>
<dbReference type="KEGG" id="mmq:MmarC5_0014"/>
<dbReference type="eggNOG" id="arCOG04868">
    <property type="taxonomic scope" value="Archaea"/>
</dbReference>
<dbReference type="HOGENOM" id="CLU_092286_0_0_2"/>
<dbReference type="OrthoDB" id="60591at2157"/>
<dbReference type="UniPathway" id="UPA00640">
    <property type="reaction ID" value="UER00698"/>
</dbReference>
<dbReference type="Proteomes" id="UP000000253">
    <property type="component" value="Chromosome"/>
</dbReference>
<dbReference type="GO" id="GO:0005886">
    <property type="term" value="C:plasma membrane"/>
    <property type="evidence" value="ECO:0007669"/>
    <property type="project" value="UniProtKB-SubCell"/>
</dbReference>
<dbReference type="GO" id="GO:0030269">
    <property type="term" value="F:tetrahydromethanopterin S-methyltransferase activity"/>
    <property type="evidence" value="ECO:0007669"/>
    <property type="project" value="UniProtKB-UniRule"/>
</dbReference>
<dbReference type="GO" id="GO:0019386">
    <property type="term" value="P:methanogenesis, from carbon dioxide"/>
    <property type="evidence" value="ECO:0007669"/>
    <property type="project" value="UniProtKB-UniRule"/>
</dbReference>
<dbReference type="GO" id="GO:0032259">
    <property type="term" value="P:methylation"/>
    <property type="evidence" value="ECO:0007669"/>
    <property type="project" value="UniProtKB-KW"/>
</dbReference>
<dbReference type="GO" id="GO:0006730">
    <property type="term" value="P:one-carbon metabolic process"/>
    <property type="evidence" value="ECO:0007669"/>
    <property type="project" value="UniProtKB-UniRule"/>
</dbReference>
<dbReference type="HAMAP" id="MF_01096">
    <property type="entry name" value="MtrC"/>
    <property type="match status" value="1"/>
</dbReference>
<dbReference type="InterPro" id="IPR005865">
    <property type="entry name" value="THM_MeTrfase_su_C"/>
</dbReference>
<dbReference type="NCBIfam" id="TIGR01148">
    <property type="entry name" value="mtrC"/>
    <property type="match status" value="1"/>
</dbReference>
<dbReference type="Pfam" id="PF04211">
    <property type="entry name" value="MtrC"/>
    <property type="match status" value="1"/>
</dbReference>
<dbReference type="PIRSF" id="PIRSF006530">
    <property type="entry name" value="MtrC"/>
    <property type="match status" value="1"/>
</dbReference>
<name>MTRC_METM5</name>